<feature type="chain" id="PRO_1000006764" description="Aspartate--tRNA(Asp/Asn) ligase">
    <location>
        <begin position="1"/>
        <end position="594"/>
    </location>
</feature>
<feature type="region of interest" description="Aspartate" evidence="1">
    <location>
        <begin position="199"/>
        <end position="202"/>
    </location>
</feature>
<feature type="binding site" evidence="1">
    <location>
        <position position="175"/>
    </location>
    <ligand>
        <name>L-aspartate</name>
        <dbReference type="ChEBI" id="CHEBI:29991"/>
    </ligand>
</feature>
<feature type="binding site" evidence="1">
    <location>
        <begin position="221"/>
        <end position="223"/>
    </location>
    <ligand>
        <name>ATP</name>
        <dbReference type="ChEBI" id="CHEBI:30616"/>
    </ligand>
</feature>
<feature type="binding site" evidence="1">
    <location>
        <position position="221"/>
    </location>
    <ligand>
        <name>L-aspartate</name>
        <dbReference type="ChEBI" id="CHEBI:29991"/>
    </ligand>
</feature>
<feature type="binding site" evidence="1">
    <location>
        <position position="455"/>
    </location>
    <ligand>
        <name>L-aspartate</name>
        <dbReference type="ChEBI" id="CHEBI:29991"/>
    </ligand>
</feature>
<feature type="binding site" evidence="1">
    <location>
        <position position="488"/>
    </location>
    <ligand>
        <name>ATP</name>
        <dbReference type="ChEBI" id="CHEBI:30616"/>
    </ligand>
</feature>
<feature type="binding site" evidence="1">
    <location>
        <position position="495"/>
    </location>
    <ligand>
        <name>L-aspartate</name>
        <dbReference type="ChEBI" id="CHEBI:29991"/>
    </ligand>
</feature>
<feature type="binding site" evidence="1">
    <location>
        <begin position="540"/>
        <end position="543"/>
    </location>
    <ligand>
        <name>ATP</name>
        <dbReference type="ChEBI" id="CHEBI:30616"/>
    </ligand>
</feature>
<feature type="site" description="Important for tRNA non-discrimination" evidence="1">
    <location>
        <position position="33"/>
    </location>
</feature>
<organism>
    <name type="scientific">Ruegeria sp. (strain TM1040)</name>
    <name type="common">Silicibacter sp.</name>
    <dbReference type="NCBI Taxonomy" id="292414"/>
    <lineage>
        <taxon>Bacteria</taxon>
        <taxon>Pseudomonadati</taxon>
        <taxon>Pseudomonadota</taxon>
        <taxon>Alphaproteobacteria</taxon>
        <taxon>Rhodobacterales</taxon>
        <taxon>Roseobacteraceae</taxon>
        <taxon>Ruegeria</taxon>
    </lineage>
</organism>
<protein>
    <recommendedName>
        <fullName evidence="1">Aspartate--tRNA(Asp/Asn) ligase</fullName>
        <ecNumber evidence="1">6.1.1.23</ecNumber>
    </recommendedName>
    <alternativeName>
        <fullName evidence="1">Aspartyl-tRNA synthetase</fullName>
        <shortName evidence="1">AspRS</shortName>
    </alternativeName>
    <alternativeName>
        <fullName evidence="1">Non-discriminating aspartyl-tRNA synthetase</fullName>
        <shortName evidence="1">ND-AspRS</shortName>
    </alternativeName>
</protein>
<reference key="1">
    <citation type="submission" date="2006-05" db="EMBL/GenBank/DDBJ databases">
        <title>Complete sequence of chromosome of Silicibacter sp. TM1040.</title>
        <authorList>
            <consortium name="US DOE Joint Genome Institute"/>
            <person name="Copeland A."/>
            <person name="Lucas S."/>
            <person name="Lapidus A."/>
            <person name="Barry K."/>
            <person name="Detter J.C."/>
            <person name="Glavina del Rio T."/>
            <person name="Hammon N."/>
            <person name="Israni S."/>
            <person name="Dalin E."/>
            <person name="Tice H."/>
            <person name="Pitluck S."/>
            <person name="Brettin T."/>
            <person name="Bruce D."/>
            <person name="Han C."/>
            <person name="Tapia R."/>
            <person name="Goodwin L."/>
            <person name="Thompson L.S."/>
            <person name="Gilna P."/>
            <person name="Schmutz J."/>
            <person name="Larimer F."/>
            <person name="Land M."/>
            <person name="Hauser L."/>
            <person name="Kyrpides N."/>
            <person name="Kim E."/>
            <person name="Belas R."/>
            <person name="Moran M.A."/>
            <person name="Buchan A."/>
            <person name="Gonzalez J.M."/>
            <person name="Schell M.A."/>
            <person name="Sun F."/>
            <person name="Richardson P."/>
        </authorList>
    </citation>
    <scope>NUCLEOTIDE SEQUENCE [LARGE SCALE GENOMIC DNA]</scope>
    <source>
        <strain>TM1040</strain>
    </source>
</reference>
<name>SYDND_RUEST</name>
<dbReference type="EC" id="6.1.1.23" evidence="1"/>
<dbReference type="EMBL" id="CP000377">
    <property type="protein sequence ID" value="ABF63368.1"/>
    <property type="molecule type" value="Genomic_DNA"/>
</dbReference>
<dbReference type="RefSeq" id="WP_011537980.1">
    <property type="nucleotide sequence ID" value="NC_008044.1"/>
</dbReference>
<dbReference type="SMR" id="Q1GIZ8"/>
<dbReference type="STRING" id="292414.TM1040_0635"/>
<dbReference type="KEGG" id="sit:TM1040_0635"/>
<dbReference type="eggNOG" id="COG0173">
    <property type="taxonomic scope" value="Bacteria"/>
</dbReference>
<dbReference type="HOGENOM" id="CLU_014330_3_2_5"/>
<dbReference type="OrthoDB" id="9802326at2"/>
<dbReference type="Proteomes" id="UP000000636">
    <property type="component" value="Chromosome"/>
</dbReference>
<dbReference type="GO" id="GO:0005737">
    <property type="term" value="C:cytoplasm"/>
    <property type="evidence" value="ECO:0007669"/>
    <property type="project" value="UniProtKB-SubCell"/>
</dbReference>
<dbReference type="GO" id="GO:0004815">
    <property type="term" value="F:aspartate-tRNA ligase activity"/>
    <property type="evidence" value="ECO:0007669"/>
    <property type="project" value="UniProtKB-UniRule"/>
</dbReference>
<dbReference type="GO" id="GO:0050560">
    <property type="term" value="F:aspartate-tRNA(Asn) ligase activity"/>
    <property type="evidence" value="ECO:0007669"/>
    <property type="project" value="UniProtKB-EC"/>
</dbReference>
<dbReference type="GO" id="GO:0005524">
    <property type="term" value="F:ATP binding"/>
    <property type="evidence" value="ECO:0007669"/>
    <property type="project" value="UniProtKB-UniRule"/>
</dbReference>
<dbReference type="GO" id="GO:0003676">
    <property type="term" value="F:nucleic acid binding"/>
    <property type="evidence" value="ECO:0007669"/>
    <property type="project" value="InterPro"/>
</dbReference>
<dbReference type="GO" id="GO:0006422">
    <property type="term" value="P:aspartyl-tRNA aminoacylation"/>
    <property type="evidence" value="ECO:0007669"/>
    <property type="project" value="UniProtKB-UniRule"/>
</dbReference>
<dbReference type="CDD" id="cd00777">
    <property type="entry name" value="AspRS_core"/>
    <property type="match status" value="1"/>
</dbReference>
<dbReference type="CDD" id="cd04317">
    <property type="entry name" value="EcAspRS_like_N"/>
    <property type="match status" value="1"/>
</dbReference>
<dbReference type="Gene3D" id="3.30.930.10">
    <property type="entry name" value="Bira Bifunctional Protein, Domain 2"/>
    <property type="match status" value="1"/>
</dbReference>
<dbReference type="Gene3D" id="3.30.1360.30">
    <property type="entry name" value="GAD-like domain"/>
    <property type="match status" value="1"/>
</dbReference>
<dbReference type="Gene3D" id="2.40.50.140">
    <property type="entry name" value="Nucleic acid-binding proteins"/>
    <property type="match status" value="1"/>
</dbReference>
<dbReference type="HAMAP" id="MF_00044">
    <property type="entry name" value="Asp_tRNA_synth_type1"/>
    <property type="match status" value="1"/>
</dbReference>
<dbReference type="InterPro" id="IPR004364">
    <property type="entry name" value="Aa-tRNA-synt_II"/>
</dbReference>
<dbReference type="InterPro" id="IPR006195">
    <property type="entry name" value="aa-tRNA-synth_II"/>
</dbReference>
<dbReference type="InterPro" id="IPR045864">
    <property type="entry name" value="aa-tRNA-synth_II/BPL/LPL"/>
</dbReference>
<dbReference type="InterPro" id="IPR004524">
    <property type="entry name" value="Asp-tRNA-ligase_1"/>
</dbReference>
<dbReference type="InterPro" id="IPR047089">
    <property type="entry name" value="Asp-tRNA-ligase_1_N"/>
</dbReference>
<dbReference type="InterPro" id="IPR002312">
    <property type="entry name" value="Asp/Asn-tRNA-synth_IIb"/>
</dbReference>
<dbReference type="InterPro" id="IPR047090">
    <property type="entry name" value="AspRS_core"/>
</dbReference>
<dbReference type="InterPro" id="IPR004115">
    <property type="entry name" value="GAD-like_sf"/>
</dbReference>
<dbReference type="InterPro" id="IPR029351">
    <property type="entry name" value="GAD_dom"/>
</dbReference>
<dbReference type="InterPro" id="IPR012340">
    <property type="entry name" value="NA-bd_OB-fold"/>
</dbReference>
<dbReference type="InterPro" id="IPR004365">
    <property type="entry name" value="NA-bd_OB_tRNA"/>
</dbReference>
<dbReference type="NCBIfam" id="TIGR00459">
    <property type="entry name" value="aspS_bact"/>
    <property type="match status" value="1"/>
</dbReference>
<dbReference type="NCBIfam" id="NF001750">
    <property type="entry name" value="PRK00476.1"/>
    <property type="match status" value="1"/>
</dbReference>
<dbReference type="PANTHER" id="PTHR22594:SF5">
    <property type="entry name" value="ASPARTATE--TRNA LIGASE, MITOCHONDRIAL"/>
    <property type="match status" value="1"/>
</dbReference>
<dbReference type="PANTHER" id="PTHR22594">
    <property type="entry name" value="ASPARTYL/LYSYL-TRNA SYNTHETASE"/>
    <property type="match status" value="1"/>
</dbReference>
<dbReference type="Pfam" id="PF02938">
    <property type="entry name" value="GAD"/>
    <property type="match status" value="1"/>
</dbReference>
<dbReference type="Pfam" id="PF00152">
    <property type="entry name" value="tRNA-synt_2"/>
    <property type="match status" value="1"/>
</dbReference>
<dbReference type="Pfam" id="PF01336">
    <property type="entry name" value="tRNA_anti-codon"/>
    <property type="match status" value="1"/>
</dbReference>
<dbReference type="PRINTS" id="PR01042">
    <property type="entry name" value="TRNASYNTHASP"/>
</dbReference>
<dbReference type="SUPFAM" id="SSF55681">
    <property type="entry name" value="Class II aaRS and biotin synthetases"/>
    <property type="match status" value="1"/>
</dbReference>
<dbReference type="SUPFAM" id="SSF55261">
    <property type="entry name" value="GAD domain-like"/>
    <property type="match status" value="1"/>
</dbReference>
<dbReference type="SUPFAM" id="SSF50249">
    <property type="entry name" value="Nucleic acid-binding proteins"/>
    <property type="match status" value="1"/>
</dbReference>
<dbReference type="PROSITE" id="PS50862">
    <property type="entry name" value="AA_TRNA_LIGASE_II"/>
    <property type="match status" value="1"/>
</dbReference>
<evidence type="ECO:0000255" key="1">
    <source>
        <dbReference type="HAMAP-Rule" id="MF_00044"/>
    </source>
</evidence>
<keyword id="KW-0030">Aminoacyl-tRNA synthetase</keyword>
<keyword id="KW-0067">ATP-binding</keyword>
<keyword id="KW-0963">Cytoplasm</keyword>
<keyword id="KW-0436">Ligase</keyword>
<keyword id="KW-0547">Nucleotide-binding</keyword>
<keyword id="KW-0648">Protein biosynthesis</keyword>
<keyword id="KW-1185">Reference proteome</keyword>
<gene>
    <name evidence="1" type="primary">aspS</name>
    <name type="ordered locus">TM1040_0635</name>
</gene>
<comment type="function">
    <text evidence="1">Aspartyl-tRNA synthetase with relaxed tRNA specificity since it is able to aspartylate not only its cognate tRNA(Asp) but also tRNA(Asn). Reaction proceeds in two steps: L-aspartate is first activated by ATP to form Asp-AMP and then transferred to the acceptor end of tRNA(Asp/Asn).</text>
</comment>
<comment type="catalytic activity">
    <reaction evidence="1">
        <text>tRNA(Asx) + L-aspartate + ATP = L-aspartyl-tRNA(Asx) + AMP + diphosphate</text>
        <dbReference type="Rhea" id="RHEA:18349"/>
        <dbReference type="Rhea" id="RHEA-COMP:9710"/>
        <dbReference type="Rhea" id="RHEA-COMP:9711"/>
        <dbReference type="ChEBI" id="CHEBI:29991"/>
        <dbReference type="ChEBI" id="CHEBI:30616"/>
        <dbReference type="ChEBI" id="CHEBI:33019"/>
        <dbReference type="ChEBI" id="CHEBI:78442"/>
        <dbReference type="ChEBI" id="CHEBI:78516"/>
        <dbReference type="ChEBI" id="CHEBI:456215"/>
        <dbReference type="EC" id="6.1.1.23"/>
    </reaction>
</comment>
<comment type="subunit">
    <text evidence="1">Homodimer.</text>
</comment>
<comment type="subcellular location">
    <subcellularLocation>
        <location evidence="1">Cytoplasm</location>
    </subcellularLocation>
</comment>
<comment type="similarity">
    <text evidence="1">Belongs to the class-II aminoacyl-tRNA synthetase family. Type 1 subfamily.</text>
</comment>
<proteinExistence type="inferred from homology"/>
<accession>Q1GIZ8</accession>
<sequence>MHAFRSHTCAELNKSHVGETVRLSGWVHRVRDHGGLLFIDLRDHYGVTQVMADPDSPVFAEIEKVRSEWCIRIDGEVKARDESLVNAKIPTGEIEVFIRDIEVLGKSEELPLMVFGEQEYPEETRLRYRYLDLRREKMQRNMVLRSNMIRSIRNRMWDQGFNEYQTPIITASSPEGARDFLVPSRLHPGKFYALPQAPQQFKQLMMVSGFDKYFQIAPCFRDEDPRADRSPTDFYQLDMEMSFVTQQDVFDTIAPVIAGVFEEFGQGRKVDAPNEWPQISYKDAALWYGSDKPDLRNPIKMQVVSEHFRGSGFAIFAKLLEQEGTEIRAIPAPTGGSRKFCDRMNAFAQKEGLPGMGYIFWREGADGMEAAGPLAKNIGPERTEAIRQQLGLGVGDAAFFLGGKPKTFEAVAGRARNVIGEELNLTDKDRFAFAWIVDFPIYEKDEETGKIDFEHNPFSMPQGGMDALNGDPLDVRGNQYDLACNGYELVSGAIRNHKPEIMFKAFEIAGYGKEEVEKRFGGMVNAFQYGAPPHGGCAAGIDRMVMLLADEANIREVIMFPMNQRAEDLMMAAPSEPMSEQLMELGLRVIPQDD</sequence>